<gene>
    <name type="primary">Cbp20-A</name>
    <name type="ORF">GJ18756</name>
</gene>
<protein>
    <recommendedName>
        <fullName>Nuclear cap-binding protein subunit 2-A</fullName>
    </recommendedName>
    <alternativeName>
        <fullName>20 kDa nuclear cap-binding protein A</fullName>
    </alternativeName>
    <alternativeName>
        <fullName>NCBP 20 kDa subunit A</fullName>
        <shortName>CBP20-A</shortName>
    </alternativeName>
</protein>
<feature type="chain" id="PRO_0000385272" description="Nuclear cap-binding protein subunit 2-A">
    <location>
        <begin position="1"/>
        <end position="154"/>
    </location>
</feature>
<feature type="domain" description="RRM" evidence="2">
    <location>
        <begin position="30"/>
        <end position="108"/>
    </location>
</feature>
<feature type="binding site" evidence="1">
    <location>
        <position position="10"/>
    </location>
    <ligand>
        <name>mRNA</name>
        <dbReference type="ChEBI" id="CHEBI:33699"/>
    </ligand>
    <ligandPart>
        <name>mRNA cap</name>
    </ligandPart>
</feature>
<feature type="binding site" evidence="1">
    <location>
        <position position="33"/>
    </location>
    <ligand>
        <name>mRNA</name>
        <dbReference type="ChEBI" id="CHEBI:33699"/>
    </ligand>
    <ligandPart>
        <name>mRNA cap</name>
    </ligandPart>
</feature>
<feature type="binding site" evidence="1">
    <location>
        <begin position="102"/>
        <end position="106"/>
    </location>
    <ligand>
        <name>mRNA</name>
        <dbReference type="ChEBI" id="CHEBI:33699"/>
    </ligand>
    <ligandPart>
        <name>mRNA cap</name>
    </ligandPart>
</feature>
<feature type="binding site" evidence="1">
    <location>
        <begin position="113"/>
        <end position="117"/>
    </location>
    <ligand>
        <name>mRNA</name>
        <dbReference type="ChEBI" id="CHEBI:33699"/>
    </ligand>
    <ligandPart>
        <name>mRNA cap</name>
    </ligandPart>
</feature>
<feature type="binding site" evidence="1">
    <location>
        <begin position="123"/>
        <end position="124"/>
    </location>
    <ligand>
        <name>mRNA</name>
        <dbReference type="ChEBI" id="CHEBI:33699"/>
    </ligand>
    <ligandPart>
        <name>mRNA cap</name>
    </ligandPart>
</feature>
<dbReference type="EMBL" id="CH940651">
    <property type="protein sequence ID" value="EDW65709.1"/>
    <property type="molecule type" value="Genomic_DNA"/>
</dbReference>
<dbReference type="SMR" id="B4M205"/>
<dbReference type="STRING" id="7244.B4M205"/>
<dbReference type="EnsemblMetazoa" id="FBtr0234681">
    <property type="protein sequence ID" value="FBpp0233173"/>
    <property type="gene ID" value="FBgn0205908"/>
</dbReference>
<dbReference type="EnsemblMetazoa" id="XM_002055472.3">
    <property type="protein sequence ID" value="XP_002055508.2"/>
    <property type="gene ID" value="LOC6632093"/>
</dbReference>
<dbReference type="GeneID" id="6632093"/>
<dbReference type="KEGG" id="dvi:6632093"/>
<dbReference type="eggNOG" id="KOG0121">
    <property type="taxonomic scope" value="Eukaryota"/>
</dbReference>
<dbReference type="HOGENOM" id="CLU_070952_2_0_1"/>
<dbReference type="InParanoid" id="B4M205"/>
<dbReference type="OMA" id="IMGINRN"/>
<dbReference type="OrthoDB" id="201398at2759"/>
<dbReference type="PhylomeDB" id="B4M205"/>
<dbReference type="Proteomes" id="UP000008792">
    <property type="component" value="Unassembled WGS sequence"/>
</dbReference>
<dbReference type="GO" id="GO:0005846">
    <property type="term" value="C:nuclear cap binding complex"/>
    <property type="evidence" value="ECO:0007669"/>
    <property type="project" value="InterPro"/>
</dbReference>
<dbReference type="GO" id="GO:0005634">
    <property type="term" value="C:nucleus"/>
    <property type="evidence" value="ECO:0007669"/>
    <property type="project" value="UniProtKB-SubCell"/>
</dbReference>
<dbReference type="GO" id="GO:0000339">
    <property type="term" value="F:RNA cap binding"/>
    <property type="evidence" value="ECO:0007669"/>
    <property type="project" value="InterPro"/>
</dbReference>
<dbReference type="GO" id="GO:0045292">
    <property type="term" value="P:mRNA cis splicing, via spliceosome"/>
    <property type="evidence" value="ECO:0007669"/>
    <property type="project" value="InterPro"/>
</dbReference>
<dbReference type="GO" id="GO:0031047">
    <property type="term" value="P:regulatory ncRNA-mediated gene silencing"/>
    <property type="evidence" value="ECO:0007669"/>
    <property type="project" value="UniProtKB-KW"/>
</dbReference>
<dbReference type="CDD" id="cd12240">
    <property type="entry name" value="RRM_NCBP2"/>
    <property type="match status" value="1"/>
</dbReference>
<dbReference type="FunFam" id="3.30.70.330:FF:000128">
    <property type="entry name" value="Nuclear cap-binding protein subunit 2"/>
    <property type="match status" value="1"/>
</dbReference>
<dbReference type="Gene3D" id="3.30.70.330">
    <property type="match status" value="1"/>
</dbReference>
<dbReference type="InterPro" id="IPR027157">
    <property type="entry name" value="NCBP2"/>
</dbReference>
<dbReference type="InterPro" id="IPR034148">
    <property type="entry name" value="NCBP2_RRM"/>
</dbReference>
<dbReference type="InterPro" id="IPR012677">
    <property type="entry name" value="Nucleotide-bd_a/b_plait_sf"/>
</dbReference>
<dbReference type="InterPro" id="IPR035979">
    <property type="entry name" value="RBD_domain_sf"/>
</dbReference>
<dbReference type="InterPro" id="IPR000504">
    <property type="entry name" value="RRM_dom"/>
</dbReference>
<dbReference type="PANTHER" id="PTHR18847">
    <property type="entry name" value="20 KD NUCLEAR CAP BINDING PROTEIN"/>
    <property type="match status" value="1"/>
</dbReference>
<dbReference type="PANTHER" id="PTHR18847:SF0">
    <property type="entry name" value="NUCLEAR CAP-BINDING PROTEIN SUBUNIT 2"/>
    <property type="match status" value="1"/>
</dbReference>
<dbReference type="Pfam" id="PF00076">
    <property type="entry name" value="RRM_1"/>
    <property type="match status" value="1"/>
</dbReference>
<dbReference type="SMART" id="SM00360">
    <property type="entry name" value="RRM"/>
    <property type="match status" value="1"/>
</dbReference>
<dbReference type="SUPFAM" id="SSF54928">
    <property type="entry name" value="RNA-binding domain, RBD"/>
    <property type="match status" value="1"/>
</dbReference>
<dbReference type="PROSITE" id="PS50102">
    <property type="entry name" value="RRM"/>
    <property type="match status" value="1"/>
</dbReference>
<sequence length="154" mass="17846">MTTSIELSSYRDQHYKGSRFEQERSLRDSSTLYVGNLSFYTAEEQIHELFSRCGDVRMIVMGLDKYKKTPCGFCFVEYYKRSEAEAAMRFVNGTRLDDRLIRVDWDAGFIEGRQYGRGKTGGQVRDEYRTDYDAARGGYGKLLTQKIAPNPDNR</sequence>
<keyword id="KW-0507">mRNA processing</keyword>
<keyword id="KW-0508">mRNA splicing</keyword>
<keyword id="KW-0539">Nucleus</keyword>
<keyword id="KW-1185">Reference proteome</keyword>
<keyword id="KW-0694">RNA-binding</keyword>
<keyword id="KW-0943">RNA-mediated gene silencing</keyword>
<name>NCB2A_DROVI</name>
<accession>B4M205</accession>
<proteinExistence type="inferred from homology"/>
<organism>
    <name type="scientific">Drosophila virilis</name>
    <name type="common">Fruit fly</name>
    <dbReference type="NCBI Taxonomy" id="7244"/>
    <lineage>
        <taxon>Eukaryota</taxon>
        <taxon>Metazoa</taxon>
        <taxon>Ecdysozoa</taxon>
        <taxon>Arthropoda</taxon>
        <taxon>Hexapoda</taxon>
        <taxon>Insecta</taxon>
        <taxon>Pterygota</taxon>
        <taxon>Neoptera</taxon>
        <taxon>Endopterygota</taxon>
        <taxon>Diptera</taxon>
        <taxon>Brachycera</taxon>
        <taxon>Muscomorpha</taxon>
        <taxon>Ephydroidea</taxon>
        <taxon>Drosophilidae</taxon>
        <taxon>Drosophila</taxon>
    </lineage>
</organism>
<comment type="function">
    <text evidence="1">Component of the cap-binding complex (CBC), which binds co-transcriptionally to the 5' cap of pre-mRNAs and is involved in various processes such as pre-mRNA splicing and RNA-mediated gene silencing (RNAi). The CBC complex is involved in miRNA-mediated RNA interference via its interaction with Ars2 and is required for primary microRNAs (miRNAs) processing. Also involved in innate immunity via the short interfering RNAs (siRNAs) processing machinery by restricting the viral RNA production. In the CBC complex, Cbp20 recognizes and binds capped RNAs (m7GpppG-capped RNA) but requires Cbp80 to stabilize the movement of its N-terminal loop and lock the CBC into a high affinity cap-binding state with the cap structure (By similarity).</text>
</comment>
<comment type="subunit">
    <text evidence="1">Component of the nuclear cap-binding complex (CBC), a heterodimer composed of Cbp80 and Cbp20 that interacts with m7GpppG-capped RNA. Interacts with Ars2 (By similarity).</text>
</comment>
<comment type="subcellular location">
    <subcellularLocation>
        <location evidence="1">Nucleus</location>
    </subcellularLocation>
</comment>
<comment type="similarity">
    <text evidence="3">Belongs to the RRM NCBP2 family.</text>
</comment>
<reference key="1">
    <citation type="journal article" date="2007" name="Nature">
        <title>Evolution of genes and genomes on the Drosophila phylogeny.</title>
        <authorList>
            <consortium name="Drosophila 12 genomes consortium"/>
        </authorList>
    </citation>
    <scope>NUCLEOTIDE SEQUENCE [LARGE SCALE GENOMIC DNA]</scope>
    <source>
        <strain>Tucson 15010-1051.87</strain>
    </source>
</reference>
<evidence type="ECO:0000250" key="1"/>
<evidence type="ECO:0000255" key="2">
    <source>
        <dbReference type="PROSITE-ProRule" id="PRU00176"/>
    </source>
</evidence>
<evidence type="ECO:0000305" key="3"/>